<gene>
    <name evidence="1" type="primary">rbfA</name>
    <name type="ordered locus">Smal_2814</name>
</gene>
<comment type="function">
    <text evidence="1">One of several proteins that assist in the late maturation steps of the functional core of the 30S ribosomal subunit. Associates with free 30S ribosomal subunits (but not with 30S subunits that are part of 70S ribosomes or polysomes). Required for efficient processing of 16S rRNA. May interact with the 5'-terminal helix region of 16S rRNA.</text>
</comment>
<comment type="subunit">
    <text evidence="1">Monomer. Binds 30S ribosomal subunits, but not 50S ribosomal subunits or 70S ribosomes.</text>
</comment>
<comment type="subcellular location">
    <subcellularLocation>
        <location evidence="1">Cytoplasm</location>
    </subcellularLocation>
</comment>
<comment type="similarity">
    <text evidence="1">Belongs to the RbfA family.</text>
</comment>
<protein>
    <recommendedName>
        <fullName evidence="1">Ribosome-binding factor A</fullName>
    </recommendedName>
</protein>
<proteinExistence type="inferred from homology"/>
<dbReference type="EMBL" id="CP001111">
    <property type="protein sequence ID" value="ACF52514.1"/>
    <property type="molecule type" value="Genomic_DNA"/>
</dbReference>
<dbReference type="RefSeq" id="WP_012511702.1">
    <property type="nucleotide sequence ID" value="NC_011071.1"/>
</dbReference>
<dbReference type="SMR" id="B4SQR9"/>
<dbReference type="STRING" id="391008.Smal_2814"/>
<dbReference type="KEGG" id="smt:Smal_2814"/>
<dbReference type="eggNOG" id="COG0858">
    <property type="taxonomic scope" value="Bacteria"/>
</dbReference>
<dbReference type="HOGENOM" id="CLU_089475_5_0_6"/>
<dbReference type="OrthoDB" id="307788at2"/>
<dbReference type="Proteomes" id="UP000001867">
    <property type="component" value="Chromosome"/>
</dbReference>
<dbReference type="GO" id="GO:0005829">
    <property type="term" value="C:cytosol"/>
    <property type="evidence" value="ECO:0007669"/>
    <property type="project" value="TreeGrafter"/>
</dbReference>
<dbReference type="GO" id="GO:0043024">
    <property type="term" value="F:ribosomal small subunit binding"/>
    <property type="evidence" value="ECO:0007669"/>
    <property type="project" value="TreeGrafter"/>
</dbReference>
<dbReference type="GO" id="GO:0030490">
    <property type="term" value="P:maturation of SSU-rRNA"/>
    <property type="evidence" value="ECO:0007669"/>
    <property type="project" value="UniProtKB-UniRule"/>
</dbReference>
<dbReference type="Gene3D" id="3.30.300.20">
    <property type="match status" value="1"/>
</dbReference>
<dbReference type="HAMAP" id="MF_00003">
    <property type="entry name" value="RbfA"/>
    <property type="match status" value="1"/>
</dbReference>
<dbReference type="InterPro" id="IPR015946">
    <property type="entry name" value="KH_dom-like_a/b"/>
</dbReference>
<dbReference type="InterPro" id="IPR000238">
    <property type="entry name" value="RbfA"/>
</dbReference>
<dbReference type="InterPro" id="IPR023799">
    <property type="entry name" value="RbfA_dom_sf"/>
</dbReference>
<dbReference type="InterPro" id="IPR020053">
    <property type="entry name" value="Ribosome-bd_factorA_CS"/>
</dbReference>
<dbReference type="NCBIfam" id="TIGR00082">
    <property type="entry name" value="rbfA"/>
    <property type="match status" value="1"/>
</dbReference>
<dbReference type="PANTHER" id="PTHR33515">
    <property type="entry name" value="RIBOSOME-BINDING FACTOR A, CHLOROPLASTIC-RELATED"/>
    <property type="match status" value="1"/>
</dbReference>
<dbReference type="PANTHER" id="PTHR33515:SF1">
    <property type="entry name" value="RIBOSOME-BINDING FACTOR A, CHLOROPLASTIC-RELATED"/>
    <property type="match status" value="1"/>
</dbReference>
<dbReference type="Pfam" id="PF02033">
    <property type="entry name" value="RBFA"/>
    <property type="match status" value="1"/>
</dbReference>
<dbReference type="SUPFAM" id="SSF89919">
    <property type="entry name" value="Ribosome-binding factor A, RbfA"/>
    <property type="match status" value="1"/>
</dbReference>
<dbReference type="PROSITE" id="PS01319">
    <property type="entry name" value="RBFA"/>
    <property type="match status" value="1"/>
</dbReference>
<organism>
    <name type="scientific">Stenotrophomonas maltophilia (strain R551-3)</name>
    <dbReference type="NCBI Taxonomy" id="391008"/>
    <lineage>
        <taxon>Bacteria</taxon>
        <taxon>Pseudomonadati</taxon>
        <taxon>Pseudomonadota</taxon>
        <taxon>Gammaproteobacteria</taxon>
        <taxon>Lysobacterales</taxon>
        <taxon>Lysobacteraceae</taxon>
        <taxon>Stenotrophomonas</taxon>
        <taxon>Stenotrophomonas maltophilia group</taxon>
    </lineage>
</organism>
<accession>B4SQR9</accession>
<name>RBFA_STRM5</name>
<keyword id="KW-0963">Cytoplasm</keyword>
<keyword id="KW-0690">Ribosome biogenesis</keyword>
<evidence type="ECO:0000255" key="1">
    <source>
        <dbReference type="HAMAP-Rule" id="MF_00003"/>
    </source>
</evidence>
<reference key="1">
    <citation type="submission" date="2008-06" db="EMBL/GenBank/DDBJ databases">
        <title>Complete sequence of Stenotrophomonas maltophilia R551-3.</title>
        <authorList>
            <consortium name="US DOE Joint Genome Institute"/>
            <person name="Lucas S."/>
            <person name="Copeland A."/>
            <person name="Lapidus A."/>
            <person name="Glavina del Rio T."/>
            <person name="Dalin E."/>
            <person name="Tice H."/>
            <person name="Pitluck S."/>
            <person name="Chain P."/>
            <person name="Malfatti S."/>
            <person name="Shin M."/>
            <person name="Vergez L."/>
            <person name="Lang D."/>
            <person name="Schmutz J."/>
            <person name="Larimer F."/>
            <person name="Land M."/>
            <person name="Hauser L."/>
            <person name="Kyrpides N."/>
            <person name="Mikhailova N."/>
            <person name="Taghavi S."/>
            <person name="Monchy S."/>
            <person name="Newman L."/>
            <person name="Vangronsveld J."/>
            <person name="van der Lelie D."/>
            <person name="Richardson P."/>
        </authorList>
    </citation>
    <scope>NUCLEOTIDE SEQUENCE [LARGE SCALE GENOMIC DNA]</scope>
    <source>
        <strain>R551-3</strain>
    </source>
</reference>
<feature type="chain" id="PRO_1000201652" description="Ribosome-binding factor A">
    <location>
        <begin position="1"/>
        <end position="127"/>
    </location>
</feature>
<sequence>MPKTFHRTDRVSAQLRRELGTLVHNAVREHGLPSVSVSDVEITRDMAHAKVFVTALMPERSAEAVAGLKELGYRLRMDLARAMKLRHVPELHFHYDDSVDRGEHIDNILRDLPDTLAAEKRREGDDE</sequence>